<accession>Q8K0P3</accession>
<accession>Q69ZF1</accession>
<organism>
    <name type="scientific">Mus musculus</name>
    <name type="common">Mouse</name>
    <dbReference type="NCBI Taxonomy" id="10090"/>
    <lineage>
        <taxon>Eukaryota</taxon>
        <taxon>Metazoa</taxon>
        <taxon>Chordata</taxon>
        <taxon>Craniata</taxon>
        <taxon>Vertebrata</taxon>
        <taxon>Euteleostomi</taxon>
        <taxon>Mammalia</taxon>
        <taxon>Eutheria</taxon>
        <taxon>Euarchontoglires</taxon>
        <taxon>Glires</taxon>
        <taxon>Rodentia</taxon>
        <taxon>Myomorpha</taxon>
        <taxon>Muroidea</taxon>
        <taxon>Muridae</taxon>
        <taxon>Murinae</taxon>
        <taxon>Mus</taxon>
        <taxon>Mus</taxon>
    </lineage>
</organism>
<proteinExistence type="evidence at transcript level"/>
<comment type="function">
    <text evidence="1">Activates an alternative mTOR signaling through RPS6KB2 activation and EIF4EBP1 repression to regulate cell proliferation and migration. Recruits MTOR at the lysosome, essential for MTOR signaling at the lysosome.</text>
</comment>
<comment type="subunit">
    <text evidence="1">Interacts (via C-terminal domain) with MTOR and MLST8; the interaction with MTOR increases upon nutrient stimulation.</text>
</comment>
<comment type="subcellular location">
    <subcellularLocation>
        <location evidence="1">Membrane</location>
    </subcellularLocation>
    <subcellularLocation>
        <location evidence="1">Cytoplasm</location>
    </subcellularLocation>
    <subcellularLocation>
        <location evidence="1">Lysosome</location>
    </subcellularLocation>
</comment>
<comment type="alternative products">
    <event type="alternative splicing"/>
    <isoform>
        <id>Q8K0P3-1</id>
        <name>1</name>
        <sequence type="displayed"/>
    </isoform>
    <isoform>
        <id>Q8K0P3-2</id>
        <name>2</name>
        <sequence type="described" ref="VSP_030079 VSP_030080"/>
    </isoform>
</comment>
<comment type="sequence caution" evidence="5">
    <conflict type="erroneous initiation">
        <sequence resource="EMBL-CDS" id="BAD32493"/>
    </conflict>
    <text>Extended N-terminus.</text>
</comment>
<comment type="sequence caution" evidence="5">
    <conflict type="frameshift">
        <sequence resource="EMBL-CDS" id="BAD32493"/>
    </conflict>
</comment>
<evidence type="ECO:0000250" key="1">
    <source>
        <dbReference type="UniProtKB" id="Q6P9B6"/>
    </source>
</evidence>
<evidence type="ECO:0000255" key="2">
    <source>
        <dbReference type="PROSITE-ProRule" id="PRU01234"/>
    </source>
</evidence>
<evidence type="ECO:0000256" key="3">
    <source>
        <dbReference type="SAM" id="MobiDB-lite"/>
    </source>
</evidence>
<evidence type="ECO:0000303" key="4">
    <source>
    </source>
</evidence>
<evidence type="ECO:0000305" key="5"/>
<evidence type="ECO:0000312" key="6">
    <source>
        <dbReference type="MGI" id="MGI:1921597"/>
    </source>
</evidence>
<dbReference type="EMBL" id="AK173215">
    <property type="protein sequence ID" value="BAD32493.1"/>
    <property type="status" value="ALT_SEQ"/>
    <property type="molecule type" value="mRNA"/>
</dbReference>
<dbReference type="EMBL" id="AK079186">
    <property type="protein sequence ID" value="BAC37572.1"/>
    <property type="molecule type" value="mRNA"/>
</dbReference>
<dbReference type="EMBL" id="BC030874">
    <property type="protein sequence ID" value="AAH30874.1"/>
    <property type="molecule type" value="mRNA"/>
</dbReference>
<dbReference type="CCDS" id="CCDS40494.1">
    <molecule id="Q8K0P3-1"/>
</dbReference>
<dbReference type="RefSeq" id="NP_083159.1">
    <molecule id="Q8K0P3-1"/>
    <property type="nucleotide sequence ID" value="NM_028883.2"/>
</dbReference>
<dbReference type="RefSeq" id="XP_030099677.1">
    <molecule id="Q8K0P3-1"/>
    <property type="nucleotide sequence ID" value="XM_030243817.2"/>
</dbReference>
<dbReference type="SMR" id="Q8K0P3"/>
<dbReference type="FunCoup" id="Q8K0P3">
    <property type="interactions" value="3093"/>
</dbReference>
<dbReference type="STRING" id="10090.ENSMUSP00000044430"/>
<dbReference type="GlyGen" id="Q8K0P3">
    <property type="glycosylation" value="1 site"/>
</dbReference>
<dbReference type="iPTMnet" id="Q8K0P3"/>
<dbReference type="PhosphoSitePlus" id="Q8K0P3"/>
<dbReference type="SwissPalm" id="Q8K0P3"/>
<dbReference type="jPOST" id="Q8K0P3"/>
<dbReference type="PaxDb" id="10090-ENSMUSP00000044430"/>
<dbReference type="PeptideAtlas" id="Q8K0P3"/>
<dbReference type="ProteomicsDB" id="259457">
    <molecule id="Q8K0P3-1"/>
</dbReference>
<dbReference type="Pumba" id="Q8K0P3"/>
<dbReference type="Antibodypedia" id="48850">
    <property type="antibodies" value="230 antibodies from 18 providers"/>
</dbReference>
<dbReference type="Ensembl" id="ENSMUST00000049156.7">
    <molecule id="Q8K0P3-1"/>
    <property type="protein sequence ID" value="ENSMUSP00000044430.6"/>
    <property type="gene ID" value="ENSMUSG00000034105.10"/>
</dbReference>
<dbReference type="GeneID" id="74347"/>
<dbReference type="KEGG" id="mmu:74347"/>
<dbReference type="UCSC" id="uc009nqh.1">
    <molecule id="Q8K0P3-1"/>
    <property type="organism name" value="mouse"/>
</dbReference>
<dbReference type="AGR" id="MGI:1921597"/>
<dbReference type="CTD" id="57707"/>
<dbReference type="MGI" id="MGI:1921597">
    <property type="gene designation" value="Meak7"/>
</dbReference>
<dbReference type="VEuPathDB" id="HostDB:ENSMUSG00000034105"/>
<dbReference type="eggNOG" id="KOG2557">
    <property type="taxonomic scope" value="Eukaryota"/>
</dbReference>
<dbReference type="GeneTree" id="ENSGT00940000158087"/>
<dbReference type="HOGENOM" id="CLU_036763_2_0_1"/>
<dbReference type="InParanoid" id="Q8K0P3"/>
<dbReference type="OMA" id="CGRITHR"/>
<dbReference type="OrthoDB" id="289228at2759"/>
<dbReference type="PhylomeDB" id="Q8K0P3"/>
<dbReference type="TreeFam" id="TF316541"/>
<dbReference type="BioGRID-ORCS" id="74347">
    <property type="hits" value="1 hit in 76 CRISPR screens"/>
</dbReference>
<dbReference type="ChiTaRS" id="Tldc1">
    <property type="organism name" value="mouse"/>
</dbReference>
<dbReference type="PRO" id="PR:Q8K0P3"/>
<dbReference type="Proteomes" id="UP000000589">
    <property type="component" value="Chromosome 8"/>
</dbReference>
<dbReference type="RNAct" id="Q8K0P3">
    <property type="molecule type" value="protein"/>
</dbReference>
<dbReference type="Bgee" id="ENSMUSG00000034105">
    <property type="expression patterns" value="Expressed in retinal neural layer and 169 other cell types or tissues"/>
</dbReference>
<dbReference type="ExpressionAtlas" id="Q8K0P3">
    <property type="expression patterns" value="baseline and differential"/>
</dbReference>
<dbReference type="GO" id="GO:0005737">
    <property type="term" value="C:cytoplasm"/>
    <property type="evidence" value="ECO:0000250"/>
    <property type="project" value="UniProtKB"/>
</dbReference>
<dbReference type="GO" id="GO:0005829">
    <property type="term" value="C:cytosol"/>
    <property type="evidence" value="ECO:0007669"/>
    <property type="project" value="Ensembl"/>
</dbReference>
<dbReference type="GO" id="GO:0005765">
    <property type="term" value="C:lysosomal membrane"/>
    <property type="evidence" value="ECO:0000250"/>
    <property type="project" value="UniProtKB"/>
</dbReference>
<dbReference type="GO" id="GO:0016020">
    <property type="term" value="C:membrane"/>
    <property type="evidence" value="ECO:0000250"/>
    <property type="project" value="UniProtKB"/>
</dbReference>
<dbReference type="GO" id="GO:0005730">
    <property type="term" value="C:nucleolus"/>
    <property type="evidence" value="ECO:0007669"/>
    <property type="project" value="Ensembl"/>
</dbReference>
<dbReference type="GO" id="GO:0005654">
    <property type="term" value="C:nucleoplasm"/>
    <property type="evidence" value="ECO:0007669"/>
    <property type="project" value="Ensembl"/>
</dbReference>
<dbReference type="GO" id="GO:1900408">
    <property type="term" value="P:negative regulation of cellular response to oxidative stress"/>
    <property type="evidence" value="ECO:0000314"/>
    <property type="project" value="MGI"/>
</dbReference>
<dbReference type="GO" id="GO:0150032">
    <property type="term" value="P:positive regulation of protein localization to lysosome"/>
    <property type="evidence" value="ECO:0000250"/>
    <property type="project" value="UniProtKB"/>
</dbReference>
<dbReference type="GO" id="GO:0030334">
    <property type="term" value="P:regulation of cell migration"/>
    <property type="evidence" value="ECO:0000250"/>
    <property type="project" value="UniProtKB"/>
</dbReference>
<dbReference type="GO" id="GO:0042127">
    <property type="term" value="P:regulation of cell population proliferation"/>
    <property type="evidence" value="ECO:0000250"/>
    <property type="project" value="UniProtKB"/>
</dbReference>
<dbReference type="GO" id="GO:0043200">
    <property type="term" value="P:response to amino acid"/>
    <property type="evidence" value="ECO:0000250"/>
    <property type="project" value="UniProtKB"/>
</dbReference>
<dbReference type="GO" id="GO:0032868">
    <property type="term" value="P:response to insulin"/>
    <property type="evidence" value="ECO:0000250"/>
    <property type="project" value="UniProtKB"/>
</dbReference>
<dbReference type="GO" id="GO:0031667">
    <property type="term" value="P:response to nutrient levels"/>
    <property type="evidence" value="ECO:0000250"/>
    <property type="project" value="UniProtKB"/>
</dbReference>
<dbReference type="GO" id="GO:0031929">
    <property type="term" value="P:TOR signaling"/>
    <property type="evidence" value="ECO:0000250"/>
    <property type="project" value="UniProtKB"/>
</dbReference>
<dbReference type="InterPro" id="IPR006571">
    <property type="entry name" value="TLDc_dom"/>
</dbReference>
<dbReference type="PANTHER" id="PTHR23354:SF131">
    <property type="entry name" value="MTOR-ASSOCIATED PROTEIN MEAK7"/>
    <property type="match status" value="1"/>
</dbReference>
<dbReference type="PANTHER" id="PTHR23354">
    <property type="entry name" value="NUCLEOLAR PROTEIN 7/ESTROGEN RECEPTOR COACTIVATOR-RELATED"/>
    <property type="match status" value="1"/>
</dbReference>
<dbReference type="Pfam" id="PF07534">
    <property type="entry name" value="TLD"/>
    <property type="match status" value="1"/>
</dbReference>
<dbReference type="SMART" id="SM00584">
    <property type="entry name" value="TLDc"/>
    <property type="match status" value="1"/>
</dbReference>
<dbReference type="PROSITE" id="PS51886">
    <property type="entry name" value="TLDC"/>
    <property type="match status" value="1"/>
</dbReference>
<keyword id="KW-0025">Alternative splicing</keyword>
<keyword id="KW-0963">Cytoplasm</keyword>
<keyword id="KW-0449">Lipoprotein</keyword>
<keyword id="KW-0458">Lysosome</keyword>
<keyword id="KW-0472">Membrane</keyword>
<keyword id="KW-0519">Myristate</keyword>
<keyword id="KW-1185">Reference proteome</keyword>
<protein>
    <recommendedName>
        <fullName evidence="5">MTOR-associated protein MEAK7</fullName>
        <shortName evidence="5">MEAK7</shortName>
    </recommendedName>
    <alternativeName>
        <fullName>TBC/LysM-associated domain-containing protein 1</fullName>
    </alternativeName>
    <alternativeName>
        <fullName>TLD domain-containing protein 1</fullName>
    </alternativeName>
</protein>
<feature type="initiator methionine" description="Removed">
    <location>
        <position position="1"/>
    </location>
</feature>
<feature type="chain" id="PRO_0000313641" description="MTOR-associated protein MEAK7">
    <location>
        <begin position="2"/>
        <end position="455"/>
    </location>
</feature>
<feature type="domain" description="TLDc" evidence="2">
    <location>
        <begin position="242"/>
        <end position="410"/>
    </location>
</feature>
<feature type="region of interest" description="Disordered" evidence="3">
    <location>
        <begin position="435"/>
        <end position="455"/>
    </location>
</feature>
<feature type="compositionally biased region" description="Basic and acidic residues" evidence="3">
    <location>
        <begin position="442"/>
        <end position="455"/>
    </location>
</feature>
<feature type="lipid moiety-binding region" description="N-myristoyl glycine" evidence="1">
    <location>
        <position position="2"/>
    </location>
</feature>
<feature type="splice variant" id="VSP_030079" description="In isoform 2." evidence="4">
    <original>QAEVDKLFDVLSSSEGGVATGTFSLEAMKSHVKEALPPAMVTRLYNGMQRVK</original>
    <variation>HPGCAVRHLPQLPPGPGASATLAPAVLHAAPRAELLPALQPHHQPGAQPACP</variation>
    <location>
        <begin position="21"/>
        <end position="72"/>
    </location>
</feature>
<feature type="splice variant" id="VSP_030080" description="In isoform 2." evidence="4">
    <location>
        <begin position="73"/>
        <end position="455"/>
    </location>
</feature>
<reference key="1">
    <citation type="journal article" date="2004" name="DNA Res.">
        <title>Prediction of the coding sequences of mouse homologues of KIAA gene: IV. The complete nucleotide sequences of 500 mouse KIAA-homologous cDNAs identified by screening of terminal sequences of cDNA clones randomly sampled from size-fractionated libraries.</title>
        <authorList>
            <person name="Okazaki N."/>
            <person name="Kikuno R."/>
            <person name="Ohara R."/>
            <person name="Inamoto S."/>
            <person name="Koseki H."/>
            <person name="Hiraoka S."/>
            <person name="Saga Y."/>
            <person name="Seino S."/>
            <person name="Nishimura M."/>
            <person name="Kaisho T."/>
            <person name="Hoshino K."/>
            <person name="Kitamura H."/>
            <person name="Nagase T."/>
            <person name="Ohara O."/>
            <person name="Koga H."/>
        </authorList>
    </citation>
    <scope>NUCLEOTIDE SEQUENCE [LARGE SCALE MRNA] (ISOFORM 2)</scope>
    <source>
        <tissue>Pancreatic islet</tissue>
    </source>
</reference>
<reference key="2">
    <citation type="journal article" date="2005" name="Science">
        <title>The transcriptional landscape of the mammalian genome.</title>
        <authorList>
            <person name="Carninci P."/>
            <person name="Kasukawa T."/>
            <person name="Katayama S."/>
            <person name="Gough J."/>
            <person name="Frith M.C."/>
            <person name="Maeda N."/>
            <person name="Oyama R."/>
            <person name="Ravasi T."/>
            <person name="Lenhard B."/>
            <person name="Wells C."/>
            <person name="Kodzius R."/>
            <person name="Shimokawa K."/>
            <person name="Bajic V.B."/>
            <person name="Brenner S.E."/>
            <person name="Batalov S."/>
            <person name="Forrest A.R."/>
            <person name="Zavolan M."/>
            <person name="Davis M.J."/>
            <person name="Wilming L.G."/>
            <person name="Aidinis V."/>
            <person name="Allen J.E."/>
            <person name="Ambesi-Impiombato A."/>
            <person name="Apweiler R."/>
            <person name="Aturaliya R.N."/>
            <person name="Bailey T.L."/>
            <person name="Bansal M."/>
            <person name="Baxter L."/>
            <person name="Beisel K.W."/>
            <person name="Bersano T."/>
            <person name="Bono H."/>
            <person name="Chalk A.M."/>
            <person name="Chiu K.P."/>
            <person name="Choudhary V."/>
            <person name="Christoffels A."/>
            <person name="Clutterbuck D.R."/>
            <person name="Crowe M.L."/>
            <person name="Dalla E."/>
            <person name="Dalrymple B.P."/>
            <person name="de Bono B."/>
            <person name="Della Gatta G."/>
            <person name="di Bernardo D."/>
            <person name="Down T."/>
            <person name="Engstrom P."/>
            <person name="Fagiolini M."/>
            <person name="Faulkner G."/>
            <person name="Fletcher C.F."/>
            <person name="Fukushima T."/>
            <person name="Furuno M."/>
            <person name="Futaki S."/>
            <person name="Gariboldi M."/>
            <person name="Georgii-Hemming P."/>
            <person name="Gingeras T.R."/>
            <person name="Gojobori T."/>
            <person name="Green R.E."/>
            <person name="Gustincich S."/>
            <person name="Harbers M."/>
            <person name="Hayashi Y."/>
            <person name="Hensch T.K."/>
            <person name="Hirokawa N."/>
            <person name="Hill D."/>
            <person name="Huminiecki L."/>
            <person name="Iacono M."/>
            <person name="Ikeo K."/>
            <person name="Iwama A."/>
            <person name="Ishikawa T."/>
            <person name="Jakt M."/>
            <person name="Kanapin A."/>
            <person name="Katoh M."/>
            <person name="Kawasawa Y."/>
            <person name="Kelso J."/>
            <person name="Kitamura H."/>
            <person name="Kitano H."/>
            <person name="Kollias G."/>
            <person name="Krishnan S.P."/>
            <person name="Kruger A."/>
            <person name="Kummerfeld S.K."/>
            <person name="Kurochkin I.V."/>
            <person name="Lareau L.F."/>
            <person name="Lazarevic D."/>
            <person name="Lipovich L."/>
            <person name="Liu J."/>
            <person name="Liuni S."/>
            <person name="McWilliam S."/>
            <person name="Madan Babu M."/>
            <person name="Madera M."/>
            <person name="Marchionni L."/>
            <person name="Matsuda H."/>
            <person name="Matsuzawa S."/>
            <person name="Miki H."/>
            <person name="Mignone F."/>
            <person name="Miyake S."/>
            <person name="Morris K."/>
            <person name="Mottagui-Tabar S."/>
            <person name="Mulder N."/>
            <person name="Nakano N."/>
            <person name="Nakauchi H."/>
            <person name="Ng P."/>
            <person name="Nilsson R."/>
            <person name="Nishiguchi S."/>
            <person name="Nishikawa S."/>
            <person name="Nori F."/>
            <person name="Ohara O."/>
            <person name="Okazaki Y."/>
            <person name="Orlando V."/>
            <person name="Pang K.C."/>
            <person name="Pavan W.J."/>
            <person name="Pavesi G."/>
            <person name="Pesole G."/>
            <person name="Petrovsky N."/>
            <person name="Piazza S."/>
            <person name="Reed J."/>
            <person name="Reid J.F."/>
            <person name="Ring B.Z."/>
            <person name="Ringwald M."/>
            <person name="Rost B."/>
            <person name="Ruan Y."/>
            <person name="Salzberg S.L."/>
            <person name="Sandelin A."/>
            <person name="Schneider C."/>
            <person name="Schoenbach C."/>
            <person name="Sekiguchi K."/>
            <person name="Semple C.A."/>
            <person name="Seno S."/>
            <person name="Sessa L."/>
            <person name="Sheng Y."/>
            <person name="Shibata Y."/>
            <person name="Shimada H."/>
            <person name="Shimada K."/>
            <person name="Silva D."/>
            <person name="Sinclair B."/>
            <person name="Sperling S."/>
            <person name="Stupka E."/>
            <person name="Sugiura K."/>
            <person name="Sultana R."/>
            <person name="Takenaka Y."/>
            <person name="Taki K."/>
            <person name="Tammoja K."/>
            <person name="Tan S.L."/>
            <person name="Tang S."/>
            <person name="Taylor M.S."/>
            <person name="Tegner J."/>
            <person name="Teichmann S.A."/>
            <person name="Ueda H.R."/>
            <person name="van Nimwegen E."/>
            <person name="Verardo R."/>
            <person name="Wei C.L."/>
            <person name="Yagi K."/>
            <person name="Yamanishi H."/>
            <person name="Zabarovsky E."/>
            <person name="Zhu S."/>
            <person name="Zimmer A."/>
            <person name="Hide W."/>
            <person name="Bult C."/>
            <person name="Grimmond S.M."/>
            <person name="Teasdale R.D."/>
            <person name="Liu E.T."/>
            <person name="Brusic V."/>
            <person name="Quackenbush J."/>
            <person name="Wahlestedt C."/>
            <person name="Mattick J.S."/>
            <person name="Hume D.A."/>
            <person name="Kai C."/>
            <person name="Sasaki D."/>
            <person name="Tomaru Y."/>
            <person name="Fukuda S."/>
            <person name="Kanamori-Katayama M."/>
            <person name="Suzuki M."/>
            <person name="Aoki J."/>
            <person name="Arakawa T."/>
            <person name="Iida J."/>
            <person name="Imamura K."/>
            <person name="Itoh M."/>
            <person name="Kato T."/>
            <person name="Kawaji H."/>
            <person name="Kawagashira N."/>
            <person name="Kawashima T."/>
            <person name="Kojima M."/>
            <person name="Kondo S."/>
            <person name="Konno H."/>
            <person name="Nakano K."/>
            <person name="Ninomiya N."/>
            <person name="Nishio T."/>
            <person name="Okada M."/>
            <person name="Plessy C."/>
            <person name="Shibata K."/>
            <person name="Shiraki T."/>
            <person name="Suzuki S."/>
            <person name="Tagami M."/>
            <person name="Waki K."/>
            <person name="Watahiki A."/>
            <person name="Okamura-Oho Y."/>
            <person name="Suzuki H."/>
            <person name="Kawai J."/>
            <person name="Hayashizaki Y."/>
        </authorList>
    </citation>
    <scope>NUCLEOTIDE SEQUENCE [LARGE SCALE MRNA] (ISOFORM 1)</scope>
    <source>
        <strain>C57BL/6J</strain>
        <tissue>Urinary bladder</tissue>
    </source>
</reference>
<reference key="3">
    <citation type="journal article" date="2004" name="Genome Res.">
        <title>The status, quality, and expansion of the NIH full-length cDNA project: the Mammalian Gene Collection (MGC).</title>
        <authorList>
            <consortium name="The MGC Project Team"/>
        </authorList>
    </citation>
    <scope>NUCLEOTIDE SEQUENCE [LARGE SCALE MRNA] (ISOFORM 1)</scope>
    <source>
        <strain>FVB/N</strain>
        <tissue>Colon</tissue>
    </source>
</reference>
<sequence>MGNAKSLSGQKMASRFLPEEQAEVDKLFDVLSSSEGGVATGTFSLEAMKSHVKEALPPAMVTRLYNGMQRVKPTDRTLGSCRSVSREQFTAFLSQLLRGSCEEKGLMVMNMISDAEGPTKTRDVQKFTEDLVASVAHVLTHRHELRGWTCRKSEVPPDSMQAMVAQLLSEMKFQDGYKFQGPQCLDQVCDQAMIEEWVFHVPHVGMFLSVVVHRGLCLLGSSFDPSTLVPECLADQGGRFESILDVLSVIYLSSHLAPEHRQRWRLLFSTQLHGQSFSQLCSHITSQGPSLLVLEDRDGYVFGGFASCSWEVKPQFQGDNRCFLFSIAPRMATHLHTGYNNHFMYLNYGQQTMPNGLGMGGQHHYFGLWVAADFGKGHSKAKPACTTYNSPQLSAQEDFLFDKMEVWGLGNLLEEYEGKNKKSVLDSNPEARSLLEISGRARHSEGLREVPRDED</sequence>
<gene>
    <name type="primary">Meak7</name>
    <name type="synonym">Kiaa1609</name>
    <name evidence="6" type="synonym">Tldc1</name>
</gene>
<name>MEAK7_MOUSE</name>